<proteinExistence type="evidence at protein level"/>
<organism>
    <name type="scientific">Rattus norvegicus</name>
    <name type="common">Rat</name>
    <dbReference type="NCBI Taxonomy" id="10116"/>
    <lineage>
        <taxon>Eukaryota</taxon>
        <taxon>Metazoa</taxon>
        <taxon>Chordata</taxon>
        <taxon>Craniata</taxon>
        <taxon>Vertebrata</taxon>
        <taxon>Euteleostomi</taxon>
        <taxon>Mammalia</taxon>
        <taxon>Eutheria</taxon>
        <taxon>Euarchontoglires</taxon>
        <taxon>Glires</taxon>
        <taxon>Rodentia</taxon>
        <taxon>Myomorpha</taxon>
        <taxon>Muroidea</taxon>
        <taxon>Muridae</taxon>
        <taxon>Murinae</taxon>
        <taxon>Rattus</taxon>
    </lineage>
</organism>
<feature type="signal peptide" evidence="4">
    <location>
        <begin position="1"/>
        <end position="26"/>
    </location>
</feature>
<feature type="chain" id="PRO_0000034337" description="Metalloproteinase inhibitor 2">
    <location>
        <begin position="27"/>
        <end position="220"/>
    </location>
</feature>
<feature type="domain" description="NTR" evidence="3">
    <location>
        <begin position="27"/>
        <end position="152"/>
    </location>
</feature>
<feature type="region of interest" description="Involved in metalloproteinase-binding" evidence="2">
    <location>
        <begin position="27"/>
        <end position="30"/>
    </location>
</feature>
<feature type="region of interest" description="Involved in metalloproteinase-binding" evidence="2">
    <location>
        <begin position="95"/>
        <end position="96"/>
    </location>
</feature>
<feature type="binding site" evidence="2">
    <location>
        <position position="27"/>
    </location>
    <ligand>
        <name>Zn(2+)</name>
        <dbReference type="ChEBI" id="CHEBI:29105"/>
        <note>ligand shared with metalloproteinase partner</note>
    </ligand>
</feature>
<feature type="site" description="Involved in metalloproteinase-binding" evidence="2">
    <location>
        <position position="40"/>
    </location>
</feature>
<feature type="site" description="Involved in metalloproteinase-binding" evidence="2">
    <location>
        <position position="61"/>
    </location>
</feature>
<feature type="site" description="Involved in metalloproteinase-binding" evidence="2">
    <location>
        <position position="67"/>
    </location>
</feature>
<feature type="disulfide bond" evidence="3">
    <location>
        <begin position="27"/>
        <end position="98"/>
    </location>
</feature>
<feature type="disulfide bond" evidence="3">
    <location>
        <begin position="29"/>
        <end position="127"/>
    </location>
</feature>
<feature type="disulfide bond" evidence="3">
    <location>
        <begin position="39"/>
        <end position="152"/>
    </location>
</feature>
<feature type="disulfide bond" evidence="3">
    <location>
        <begin position="154"/>
        <end position="201"/>
    </location>
</feature>
<feature type="disulfide bond" evidence="3">
    <location>
        <begin position="159"/>
        <end position="164"/>
    </location>
</feature>
<feature type="disulfide bond" evidence="3">
    <location>
        <begin position="172"/>
        <end position="193"/>
    </location>
</feature>
<feature type="sequence conflict" description="In Ref. 1; AAA21553." evidence="5" ref="1">
    <original>S</original>
    <variation>T</variation>
    <location>
        <position position="7"/>
    </location>
</feature>
<feature type="sequence conflict" description="In Ref. 1; AAA21553." evidence="5" ref="1">
    <original>E</original>
    <variation>Q</variation>
    <location>
        <position position="153"/>
    </location>
</feature>
<sequence length="220" mass="24356">MGAAARSLRLALGLLLLATLLRPADACSCSPVHPQQAFCNADVVIRAKAVSEKEVDSGNDIYGNPIKRIQYEIKQIKMFKGPDKDIEFIYTAPSSAVCGVSLDVGGKKEYLIAGKAEGDGKMHITLCDFIVPWDTLSITQKKSLNHRYQMGCECKITRCPMIPCYISSPDECLWMDWVTEKSINGHQAKFFACIKRSDGSCAWYRGAAPPKQEFLDIEDP</sequence>
<accession>P30121</accession>
<accession>Q546J4</accession>
<reference key="1">
    <citation type="journal article" date="1994" name="Arch. Biochem. Biophys.">
        <title>Cloning and regulation of rat tissue inhibitor of metalloproteinases-2 in osteoblastic cells.</title>
        <authorList>
            <person name="Cook T.F."/>
            <person name="Burke J.S."/>
            <person name="Bergman K.D."/>
            <person name="Quinn C.O."/>
            <person name="Jeffrey J.J."/>
            <person name="Partridge N.C."/>
        </authorList>
    </citation>
    <scope>NUCLEOTIDE SEQUENCE [MRNA]</scope>
    <source>
        <strain>Sprague-Dawley</strain>
        <tissue>Bone</tissue>
    </source>
</reference>
<reference key="2">
    <citation type="submission" date="1995-06" db="EMBL/GenBank/DDBJ databases">
        <authorList>
            <person name="Gibbons K.L."/>
            <person name="O'Grady R.L."/>
            <person name="Piper A.A."/>
        </authorList>
    </citation>
    <scope>NUCLEOTIDE SEQUENCE [MRNA]</scope>
    <source>
        <tissue>Mammary gland</tissue>
    </source>
</reference>
<reference key="3">
    <citation type="journal article" date="1994" name="Exp. Cell Res.">
        <title>Cloning of the rat tissue inhibitor of metalloproteinases type 2 (TIMP-2) gene: analysis of its expression in normal and transformed thyroid cells.</title>
        <authorList>
            <person name="Santoro M."/>
            <person name="Battaglia C."/>
            <person name="Zhang L."/>
            <person name="Carlomagno F."/>
            <person name="Martelli M.L."/>
            <person name="Salvatore D."/>
            <person name="Fusco A."/>
        </authorList>
    </citation>
    <scope>NUCLEOTIDE SEQUENCE [MRNA]</scope>
</reference>
<reference key="4">
    <citation type="journal article" date="1996" name="J. Androl.">
        <title>Purification, cDNA cloning, and developmental changes in the steady-state mRNA level of rat testicular tissue inhibitor of metalloproteases-2 (TIMP-2).</title>
        <authorList>
            <person name="Grima J."/>
            <person name="Calcagno K."/>
            <person name="Cheng C.Y."/>
        </authorList>
    </citation>
    <scope>NUCLEOTIDE SEQUENCE [MRNA]</scope>
    <source>
        <tissue>Testis</tissue>
    </source>
</reference>
<reference key="5">
    <citation type="journal article" date="2001" name="Cardiovasc. Res.">
        <title>Cardiac remodeling after long term norepinephrine treatment in rats.</title>
        <authorList>
            <person name="Briest W."/>
            <person name="Hoelzl A."/>
            <person name="Rassler B."/>
            <person name="Deten A."/>
            <person name="Leicht M."/>
            <person name="Baba H.A."/>
            <person name="Zimmer H.G."/>
        </authorList>
    </citation>
    <scope>NUCLEOTIDE SEQUENCE [MRNA]</scope>
    <source>
        <strain>Sprague-Dawley</strain>
        <tissue>Heart</tissue>
    </source>
</reference>
<reference key="6">
    <citation type="journal article" date="2004" name="Genome Res.">
        <title>The status, quality, and expansion of the NIH full-length cDNA project: the Mammalian Gene Collection (MGC).</title>
        <authorList>
            <consortium name="The MGC Project Team"/>
        </authorList>
    </citation>
    <scope>NUCLEOTIDE SEQUENCE [LARGE SCALE MRNA]</scope>
    <source>
        <tissue>Ovary</tissue>
    </source>
</reference>
<reference key="7">
    <citation type="journal article" date="1992" name="Arch. Biochem. Biophys.">
        <title>Purification and sequence analysis of two rat tissue inhibitors of metalloproteinases.</title>
        <authorList>
            <person name="Roswit W.T."/>
            <person name="McCourt D.W."/>
            <person name="Partridge N.C."/>
            <person name="Jeffrey J.J."/>
        </authorList>
    </citation>
    <scope>PROTEIN SEQUENCE OF 27-48</scope>
</reference>
<protein>
    <recommendedName>
        <fullName>Metalloproteinase inhibitor 2</fullName>
    </recommendedName>
    <alternativeName>
        <fullName>Tissue inhibitor of metalloproteinases 2</fullName>
        <shortName>TIMP-2</shortName>
    </alternativeName>
</protein>
<dbReference type="EMBL" id="U14526">
    <property type="protein sequence ID" value="AAA21553.1"/>
    <property type="molecule type" value="mRNA"/>
</dbReference>
<dbReference type="EMBL" id="L31884">
    <property type="protein sequence ID" value="AAA84581.1"/>
    <property type="molecule type" value="mRNA"/>
</dbReference>
<dbReference type="EMBL" id="S72594">
    <property type="protein sequence ID" value="AAC60687.1"/>
    <property type="molecule type" value="mRNA"/>
</dbReference>
<dbReference type="EMBL" id="S82718">
    <property type="protein sequence ID" value="AAB49507.1"/>
    <property type="molecule type" value="mRNA"/>
</dbReference>
<dbReference type="EMBL" id="AJ409332">
    <property type="protein sequence ID" value="CAC35060.1"/>
    <property type="molecule type" value="mRNA"/>
</dbReference>
<dbReference type="EMBL" id="BC084714">
    <property type="protein sequence ID" value="AAH84714.1"/>
    <property type="molecule type" value="mRNA"/>
</dbReference>
<dbReference type="PIR" id="S45683">
    <property type="entry name" value="S45683"/>
</dbReference>
<dbReference type="RefSeq" id="NP_068824.1">
    <property type="nucleotide sequence ID" value="NM_021989.3"/>
</dbReference>
<dbReference type="BMRB" id="P30121"/>
<dbReference type="SMR" id="P30121"/>
<dbReference type="CORUM" id="P30121"/>
<dbReference type="FunCoup" id="P30121">
    <property type="interactions" value="141"/>
</dbReference>
<dbReference type="STRING" id="10116.ENSRNOP00000004290"/>
<dbReference type="MEROPS" id="I35.002"/>
<dbReference type="PhosphoSitePlus" id="P30121"/>
<dbReference type="PaxDb" id="10116-ENSRNOP00000004290"/>
<dbReference type="Ensembl" id="ENSRNOT00000004290.5">
    <property type="protein sequence ID" value="ENSRNOP00000004290.4"/>
    <property type="gene ID" value="ENSRNOG00000033143.2"/>
</dbReference>
<dbReference type="GeneID" id="29543"/>
<dbReference type="KEGG" id="rno:29543"/>
<dbReference type="UCSC" id="RGD:61312">
    <property type="organism name" value="rat"/>
</dbReference>
<dbReference type="AGR" id="RGD:61312"/>
<dbReference type="CTD" id="7077"/>
<dbReference type="RGD" id="61312">
    <property type="gene designation" value="Timp2"/>
</dbReference>
<dbReference type="eggNOG" id="KOG4745">
    <property type="taxonomic scope" value="Eukaryota"/>
</dbReference>
<dbReference type="GeneTree" id="ENSGT00940000153123"/>
<dbReference type="HOGENOM" id="CLU_084029_0_0_1"/>
<dbReference type="InParanoid" id="P30121"/>
<dbReference type="OMA" id="FIEPWDS"/>
<dbReference type="OrthoDB" id="23104at9989"/>
<dbReference type="PhylomeDB" id="P30121"/>
<dbReference type="Reactome" id="R-RNO-1592389">
    <property type="pathway name" value="Activation of Matrix Metalloproteinases"/>
</dbReference>
<dbReference type="Reactome" id="R-RNO-6798695">
    <property type="pathway name" value="Neutrophil degranulation"/>
</dbReference>
<dbReference type="Reactome" id="R-RNO-9839383">
    <property type="pathway name" value="TGFBR3 PTM regulation"/>
</dbReference>
<dbReference type="PRO" id="PR:P30121"/>
<dbReference type="Proteomes" id="UP000002494">
    <property type="component" value="Chromosome 10"/>
</dbReference>
<dbReference type="Bgee" id="ENSRNOG00000003148">
    <property type="expression patterns" value="Expressed in lung and 20 other cell types or tissues"/>
</dbReference>
<dbReference type="GO" id="GO:0005604">
    <property type="term" value="C:basement membrane"/>
    <property type="evidence" value="ECO:0000266"/>
    <property type="project" value="RGD"/>
</dbReference>
<dbReference type="GO" id="GO:0009986">
    <property type="term" value="C:cell surface"/>
    <property type="evidence" value="ECO:0000314"/>
    <property type="project" value="RGD"/>
</dbReference>
<dbReference type="GO" id="GO:0031012">
    <property type="term" value="C:extracellular matrix"/>
    <property type="evidence" value="ECO:0000318"/>
    <property type="project" value="GO_Central"/>
</dbReference>
<dbReference type="GO" id="GO:0005615">
    <property type="term" value="C:extracellular space"/>
    <property type="evidence" value="ECO:0000314"/>
    <property type="project" value="RGD"/>
</dbReference>
<dbReference type="GO" id="GO:0030426">
    <property type="term" value="C:growth cone"/>
    <property type="evidence" value="ECO:0000314"/>
    <property type="project" value="RGD"/>
</dbReference>
<dbReference type="GO" id="GO:0043025">
    <property type="term" value="C:neuronal cell body"/>
    <property type="evidence" value="ECO:0000314"/>
    <property type="project" value="RGD"/>
</dbReference>
<dbReference type="GO" id="GO:0008047">
    <property type="term" value="F:enzyme activator activity"/>
    <property type="evidence" value="ECO:0000266"/>
    <property type="project" value="RGD"/>
</dbReference>
<dbReference type="GO" id="GO:0005178">
    <property type="term" value="F:integrin binding"/>
    <property type="evidence" value="ECO:0000353"/>
    <property type="project" value="RGD"/>
</dbReference>
<dbReference type="GO" id="GO:0008191">
    <property type="term" value="F:metalloendopeptidase inhibitor activity"/>
    <property type="evidence" value="ECO:0000315"/>
    <property type="project" value="RGD"/>
</dbReference>
<dbReference type="GO" id="GO:0140678">
    <property type="term" value="F:molecular function inhibitor activity"/>
    <property type="evidence" value="ECO:0000266"/>
    <property type="project" value="RGD"/>
</dbReference>
<dbReference type="GO" id="GO:0030414">
    <property type="term" value="F:peptidase inhibitor activity"/>
    <property type="evidence" value="ECO:0000266"/>
    <property type="project" value="RGD"/>
</dbReference>
<dbReference type="GO" id="GO:0002020">
    <property type="term" value="F:protease binding"/>
    <property type="evidence" value="ECO:0000266"/>
    <property type="project" value="RGD"/>
</dbReference>
<dbReference type="GO" id="GO:0008270">
    <property type="term" value="F:zinc ion binding"/>
    <property type="evidence" value="ECO:0000250"/>
    <property type="project" value="UniProtKB"/>
</dbReference>
<dbReference type="GO" id="GO:0008285">
    <property type="term" value="P:negative regulation of cell population proliferation"/>
    <property type="evidence" value="ECO:0000314"/>
    <property type="project" value="RGD"/>
</dbReference>
<dbReference type="GO" id="GO:0051045">
    <property type="term" value="P:negative regulation of membrane protein ectodomain proteolysis"/>
    <property type="evidence" value="ECO:0000318"/>
    <property type="project" value="GO_Central"/>
</dbReference>
<dbReference type="GO" id="GO:0045930">
    <property type="term" value="P:negative regulation of mitotic cell cycle"/>
    <property type="evidence" value="ECO:0000314"/>
    <property type="project" value="RGD"/>
</dbReference>
<dbReference type="GO" id="GO:0045861">
    <property type="term" value="P:negative regulation of proteolysis"/>
    <property type="evidence" value="ECO:0000315"/>
    <property type="project" value="RGD"/>
</dbReference>
<dbReference type="GO" id="GO:0046580">
    <property type="term" value="P:negative regulation of Ras protein signal transduction"/>
    <property type="evidence" value="ECO:0000314"/>
    <property type="project" value="RGD"/>
</dbReference>
<dbReference type="GO" id="GO:0043410">
    <property type="term" value="P:positive regulation of MAPK cascade"/>
    <property type="evidence" value="ECO:0000314"/>
    <property type="project" value="RGD"/>
</dbReference>
<dbReference type="GO" id="GO:0045666">
    <property type="term" value="P:positive regulation of neuron differentiation"/>
    <property type="evidence" value="ECO:0000314"/>
    <property type="project" value="RGD"/>
</dbReference>
<dbReference type="GO" id="GO:0043408">
    <property type="term" value="P:regulation of MAPK cascade"/>
    <property type="evidence" value="ECO:0000266"/>
    <property type="project" value="RGD"/>
</dbReference>
<dbReference type="GO" id="GO:0045664">
    <property type="term" value="P:regulation of neuron differentiation"/>
    <property type="evidence" value="ECO:0000266"/>
    <property type="project" value="RGD"/>
</dbReference>
<dbReference type="GO" id="GO:0032487">
    <property type="term" value="P:regulation of Rap protein signal transduction"/>
    <property type="evidence" value="ECO:0000314"/>
    <property type="project" value="RGD"/>
</dbReference>
<dbReference type="GO" id="GO:0034097">
    <property type="term" value="P:response to cytokine"/>
    <property type="evidence" value="ECO:0000270"/>
    <property type="project" value="RGD"/>
</dbReference>
<dbReference type="GO" id="GO:0009725">
    <property type="term" value="P:response to hormone"/>
    <property type="evidence" value="ECO:0000318"/>
    <property type="project" value="GO_Central"/>
</dbReference>
<dbReference type="GO" id="GO:0009410">
    <property type="term" value="P:response to xenobiotic stimulus"/>
    <property type="evidence" value="ECO:0000270"/>
    <property type="project" value="RGD"/>
</dbReference>
<dbReference type="GO" id="GO:0007283">
    <property type="term" value="P:spermatogenesis"/>
    <property type="evidence" value="ECO:0000303"/>
    <property type="project" value="RGD"/>
</dbReference>
<dbReference type="CDD" id="cd03585">
    <property type="entry name" value="NTR_TIMP"/>
    <property type="match status" value="1"/>
</dbReference>
<dbReference type="FunFam" id="2.40.50.120:FF:000007">
    <property type="entry name" value="Metalloproteinase inhibitor 2"/>
    <property type="match status" value="1"/>
</dbReference>
<dbReference type="FunFam" id="3.90.370.10:FF:000001">
    <property type="entry name" value="Metalloproteinase inhibitor 3"/>
    <property type="match status" value="1"/>
</dbReference>
<dbReference type="Gene3D" id="2.40.50.120">
    <property type="match status" value="1"/>
</dbReference>
<dbReference type="Gene3D" id="3.90.370.10">
    <property type="entry name" value="Tissue inhibitor of metalloproteinase-1. Chain B, domain 1"/>
    <property type="match status" value="1"/>
</dbReference>
<dbReference type="InterPro" id="IPR001134">
    <property type="entry name" value="Netrin_domain"/>
</dbReference>
<dbReference type="InterPro" id="IPR001820">
    <property type="entry name" value="TIMP"/>
</dbReference>
<dbReference type="InterPro" id="IPR008993">
    <property type="entry name" value="TIMP-like_OB-fold"/>
</dbReference>
<dbReference type="InterPro" id="IPR027465">
    <property type="entry name" value="TIMP_C"/>
</dbReference>
<dbReference type="InterPro" id="IPR030490">
    <property type="entry name" value="TIMP_CS"/>
</dbReference>
<dbReference type="PANTHER" id="PTHR11844">
    <property type="entry name" value="METALLOPROTEASE INHIBITOR"/>
    <property type="match status" value="1"/>
</dbReference>
<dbReference type="PANTHER" id="PTHR11844:SF24">
    <property type="entry name" value="METALLOPROTEINASE INHIBITOR 2"/>
    <property type="match status" value="1"/>
</dbReference>
<dbReference type="Pfam" id="PF00965">
    <property type="entry name" value="TIMP"/>
    <property type="match status" value="1"/>
</dbReference>
<dbReference type="SMART" id="SM00206">
    <property type="entry name" value="NTR"/>
    <property type="match status" value="1"/>
</dbReference>
<dbReference type="SUPFAM" id="SSF50242">
    <property type="entry name" value="TIMP-like"/>
    <property type="match status" value="1"/>
</dbReference>
<dbReference type="PROSITE" id="PS50189">
    <property type="entry name" value="NTR"/>
    <property type="match status" value="1"/>
</dbReference>
<dbReference type="PROSITE" id="PS00288">
    <property type="entry name" value="TIMP"/>
    <property type="match status" value="1"/>
</dbReference>
<gene>
    <name type="primary">Timp2</name>
    <name type="synonym">Timp-2</name>
</gene>
<name>TIMP2_RAT</name>
<evidence type="ECO:0000250" key="1"/>
<evidence type="ECO:0000250" key="2">
    <source>
        <dbReference type="UniProtKB" id="P16035"/>
    </source>
</evidence>
<evidence type="ECO:0000255" key="3">
    <source>
        <dbReference type="PROSITE-ProRule" id="PRU00295"/>
    </source>
</evidence>
<evidence type="ECO:0000269" key="4">
    <source>
    </source>
</evidence>
<evidence type="ECO:0000305" key="5"/>
<comment type="function">
    <text>Complexes with metalloproteinases (such as collagenases) and irreversibly inactivates them by binding to their catalytic zinc cofactor.</text>
</comment>
<comment type="subunit">
    <text evidence="1">Interacts (via the C-terminal) with MMP2 (via the C-terminal PEX domain); the interaction inhibits the MMP2 activity.</text>
</comment>
<comment type="subcellular location">
    <subcellularLocation>
        <location>Secreted</location>
    </subcellularLocation>
</comment>
<comment type="PTM">
    <text>The activity of TIMP2 is dependent on the presence of disulfide bonds.</text>
</comment>
<comment type="similarity">
    <text evidence="5">Belongs to the protease inhibitor I35 (TIMP) family.</text>
</comment>
<keyword id="KW-0903">Direct protein sequencing</keyword>
<keyword id="KW-1015">Disulfide bond</keyword>
<keyword id="KW-0479">Metal-binding</keyword>
<keyword id="KW-0481">Metalloenzyme inhibitor</keyword>
<keyword id="KW-0483">Metalloprotease inhibitor</keyword>
<keyword id="KW-0646">Protease inhibitor</keyword>
<keyword id="KW-1185">Reference proteome</keyword>
<keyword id="KW-0964">Secreted</keyword>
<keyword id="KW-0732">Signal</keyword>
<keyword id="KW-0862">Zinc</keyword>